<sequence length="168" mass="18658">MKKFFTVAILAGSVLSTAHGSLLNLKAMVEAVTGRSAILSFVGYGCYCGLGGRGQPKDEVDWCCHAHDCCYQELFDQGCHPYVDHYDHTIENNTEIVCSDLNKTECDKQTCMCDKNMVLCLMNQTYREEYRGFLNVYCQGPTPNCSIYEPPPEEVTCSHQSPAPPAPP</sequence>
<dbReference type="EC" id="3.1.1.4" evidence="5"/>
<dbReference type="EMBL" id="AF306566">
    <property type="protein sequence ID" value="AAG50242.1"/>
    <property type="molecule type" value="mRNA"/>
</dbReference>
<dbReference type="EMBL" id="AK093645">
    <property type="protein sequence ID" value="BAC04210.1"/>
    <property type="molecule type" value="mRNA"/>
</dbReference>
<dbReference type="EMBL" id="AL158172">
    <property type="status" value="NOT_ANNOTATED_CDS"/>
    <property type="molecule type" value="Genomic_DNA"/>
</dbReference>
<dbReference type="EMBL" id="Z98257">
    <property type="status" value="NOT_ANNOTATED_CDS"/>
    <property type="molecule type" value="Genomic_DNA"/>
</dbReference>
<dbReference type="CCDS" id="CCDS204.2">
    <molecule id="Q9BZM2-2"/>
</dbReference>
<dbReference type="RefSeq" id="NP_001347798.1">
    <molecule id="Q9BZM2-1"/>
    <property type="nucleotide sequence ID" value="NM_001360869.2"/>
</dbReference>
<dbReference type="RefSeq" id="NP_073730.3">
    <molecule id="Q9BZM2-2"/>
    <property type="nucleotide sequence ID" value="NM_022819.4"/>
</dbReference>
<dbReference type="RefSeq" id="XP_011540258.1">
    <molecule id="Q9BZM2-2"/>
    <property type="nucleotide sequence ID" value="XM_011541956.2"/>
</dbReference>
<dbReference type="RefSeq" id="XP_054194191.1">
    <molecule id="Q9BZM2-2"/>
    <property type="nucleotide sequence ID" value="XM_054338216.1"/>
</dbReference>
<dbReference type="SMR" id="Q9BZM2"/>
<dbReference type="BioGRID" id="122219">
    <property type="interactions" value="5"/>
</dbReference>
<dbReference type="FunCoup" id="Q9BZM2">
    <property type="interactions" value="494"/>
</dbReference>
<dbReference type="IntAct" id="Q9BZM2">
    <property type="interactions" value="3"/>
</dbReference>
<dbReference type="STRING" id="9606.ENSP00000364243"/>
<dbReference type="BindingDB" id="Q9BZM2"/>
<dbReference type="ChEMBL" id="CHEMBL4278"/>
<dbReference type="GuidetoPHARMACOLOGY" id="1420"/>
<dbReference type="SwissLipids" id="SLP:000000654">
    <molecule id="Q9BZM2-1"/>
</dbReference>
<dbReference type="GlyCosmos" id="Q9BZM2">
    <property type="glycosylation" value="4 sites, No reported glycans"/>
</dbReference>
<dbReference type="GlyGen" id="Q9BZM2">
    <property type="glycosylation" value="4 sites, 1 N-linked glycan (1 site)"/>
</dbReference>
<dbReference type="iPTMnet" id="Q9BZM2"/>
<dbReference type="PhosphoSitePlus" id="Q9BZM2"/>
<dbReference type="BioMuta" id="PLA2G2F"/>
<dbReference type="DMDM" id="20139134"/>
<dbReference type="PaxDb" id="9606-ENSP00000364243"/>
<dbReference type="Antibodypedia" id="68368">
    <property type="antibodies" value="5 antibodies from 3 providers"/>
</dbReference>
<dbReference type="DNASU" id="64600"/>
<dbReference type="Ensembl" id="ENST00000375102.4">
    <molecule id="Q9BZM2-2"/>
    <property type="protein sequence ID" value="ENSP00000364243.4"/>
    <property type="gene ID" value="ENSG00000158786.5"/>
</dbReference>
<dbReference type="GeneID" id="64600"/>
<dbReference type="KEGG" id="hsa:64600"/>
<dbReference type="MANE-Select" id="ENST00000375102.4">
    <molecule id="Q9BZM2-2"/>
    <property type="protein sequence ID" value="ENSP00000364243.4"/>
    <property type="RefSeq nucleotide sequence ID" value="NM_022819.4"/>
    <property type="RefSeq protein sequence ID" value="NP_073730.3"/>
</dbReference>
<dbReference type="UCSC" id="uc009vpp.2">
    <molecule id="Q9BZM2-1"/>
    <property type="organism name" value="human"/>
</dbReference>
<dbReference type="AGR" id="HGNC:30040"/>
<dbReference type="CTD" id="64600"/>
<dbReference type="DisGeNET" id="64600"/>
<dbReference type="GeneCards" id="PLA2G2F"/>
<dbReference type="HGNC" id="HGNC:30040">
    <property type="gene designation" value="PLA2G2F"/>
</dbReference>
<dbReference type="HPA" id="ENSG00000158786">
    <property type="expression patterns" value="Group enriched (lymphoid tissue, skin, urinary bladder)"/>
</dbReference>
<dbReference type="neXtProt" id="NX_Q9BZM2"/>
<dbReference type="OpenTargets" id="ENSG00000158786"/>
<dbReference type="PharmGKB" id="PA134931043"/>
<dbReference type="VEuPathDB" id="HostDB:ENSG00000158786"/>
<dbReference type="eggNOG" id="KOG4087">
    <property type="taxonomic scope" value="Eukaryota"/>
</dbReference>
<dbReference type="GeneTree" id="ENSGT00940000161819"/>
<dbReference type="HOGENOM" id="CLU_090683_2_0_1"/>
<dbReference type="InParanoid" id="Q9BZM2"/>
<dbReference type="OMA" id="ECDKNVV"/>
<dbReference type="OrthoDB" id="10069378at2759"/>
<dbReference type="PAN-GO" id="Q9BZM2">
    <property type="GO annotations" value="5 GO annotations based on evolutionary models"/>
</dbReference>
<dbReference type="PhylomeDB" id="Q9BZM2"/>
<dbReference type="TreeFam" id="TF319283"/>
<dbReference type="PathwayCommons" id="Q9BZM2"/>
<dbReference type="Reactome" id="R-HSA-1482788">
    <property type="pathway name" value="Acyl chain remodelling of PC"/>
</dbReference>
<dbReference type="Reactome" id="R-HSA-1482801">
    <property type="pathway name" value="Acyl chain remodelling of PS"/>
</dbReference>
<dbReference type="Reactome" id="R-HSA-1482839">
    <property type="pathway name" value="Acyl chain remodelling of PE"/>
</dbReference>
<dbReference type="Reactome" id="R-HSA-1482922">
    <property type="pathway name" value="Acyl chain remodelling of PI"/>
</dbReference>
<dbReference type="Reactome" id="R-HSA-1482925">
    <property type="pathway name" value="Acyl chain remodelling of PG"/>
</dbReference>
<dbReference type="Reactome" id="R-HSA-1483166">
    <property type="pathway name" value="Synthesis of PA"/>
</dbReference>
<dbReference type="SignaLink" id="Q9BZM2"/>
<dbReference type="BioGRID-ORCS" id="64600">
    <property type="hits" value="9 hits in 1144 CRISPR screens"/>
</dbReference>
<dbReference type="GenomeRNAi" id="64600"/>
<dbReference type="Pharos" id="Q9BZM2">
    <property type="development level" value="Tchem"/>
</dbReference>
<dbReference type="PRO" id="PR:Q9BZM2"/>
<dbReference type="Proteomes" id="UP000005640">
    <property type="component" value="Chromosome 1"/>
</dbReference>
<dbReference type="RNAct" id="Q9BZM2">
    <property type="molecule type" value="protein"/>
</dbReference>
<dbReference type="Bgee" id="ENSG00000158786">
    <property type="expression patterns" value="Expressed in skin of leg and 45 other cell types or tissues"/>
</dbReference>
<dbReference type="GO" id="GO:0005829">
    <property type="term" value="C:cytosol"/>
    <property type="evidence" value="ECO:0000304"/>
    <property type="project" value="Reactome"/>
</dbReference>
<dbReference type="GO" id="GO:0005576">
    <property type="term" value="C:extracellular region"/>
    <property type="evidence" value="ECO:0000304"/>
    <property type="project" value="Reactome"/>
</dbReference>
<dbReference type="GO" id="GO:0005886">
    <property type="term" value="C:plasma membrane"/>
    <property type="evidence" value="ECO:0007669"/>
    <property type="project" value="UniProtKB-SubCell"/>
</dbReference>
<dbReference type="GO" id="GO:0005509">
    <property type="term" value="F:calcium ion binding"/>
    <property type="evidence" value="ECO:0000318"/>
    <property type="project" value="GO_Central"/>
</dbReference>
<dbReference type="GO" id="GO:0047498">
    <property type="term" value="F:calcium-dependent phospholipase A2 activity"/>
    <property type="evidence" value="ECO:0000314"/>
    <property type="project" value="UniProtKB"/>
</dbReference>
<dbReference type="GO" id="GO:0004623">
    <property type="term" value="F:phospholipase A2 activity"/>
    <property type="evidence" value="ECO:0000303"/>
    <property type="project" value="UniProtKB"/>
</dbReference>
<dbReference type="GO" id="GO:0005543">
    <property type="term" value="F:phospholipid binding"/>
    <property type="evidence" value="ECO:0000318"/>
    <property type="project" value="GO_Central"/>
</dbReference>
<dbReference type="GO" id="GO:0019369">
    <property type="term" value="P:arachidonate metabolic process"/>
    <property type="evidence" value="ECO:0007669"/>
    <property type="project" value="Ensembl"/>
</dbReference>
<dbReference type="GO" id="GO:0050482">
    <property type="term" value="P:arachidonate secretion"/>
    <property type="evidence" value="ECO:0007669"/>
    <property type="project" value="InterPro"/>
</dbReference>
<dbReference type="GO" id="GO:0045087">
    <property type="term" value="P:innate immune response"/>
    <property type="evidence" value="ECO:0007669"/>
    <property type="project" value="UniProtKB-KW"/>
</dbReference>
<dbReference type="GO" id="GO:0016042">
    <property type="term" value="P:lipid catabolic process"/>
    <property type="evidence" value="ECO:0007669"/>
    <property type="project" value="UniProtKB-KW"/>
</dbReference>
<dbReference type="GO" id="GO:0042130">
    <property type="term" value="P:negative regulation of T cell proliferation"/>
    <property type="evidence" value="ECO:0000318"/>
    <property type="project" value="GO_Central"/>
</dbReference>
<dbReference type="GO" id="GO:0036151">
    <property type="term" value="P:phosphatidylcholine acyl-chain remodeling"/>
    <property type="evidence" value="ECO:0000314"/>
    <property type="project" value="UniProtKB"/>
</dbReference>
<dbReference type="GO" id="GO:0046470">
    <property type="term" value="P:phosphatidylcholine metabolic process"/>
    <property type="evidence" value="ECO:0000318"/>
    <property type="project" value="GO_Central"/>
</dbReference>
<dbReference type="GO" id="GO:0036152">
    <property type="term" value="P:phosphatidylethanolamine acyl-chain remodeling"/>
    <property type="evidence" value="ECO:0000314"/>
    <property type="project" value="UniProtKB"/>
</dbReference>
<dbReference type="GO" id="GO:0036148">
    <property type="term" value="P:phosphatidylglycerol acyl-chain remodeling"/>
    <property type="evidence" value="ECO:0000314"/>
    <property type="project" value="UniProtKB"/>
</dbReference>
<dbReference type="GO" id="GO:0046471">
    <property type="term" value="P:phosphatidylglycerol metabolic process"/>
    <property type="evidence" value="ECO:0000318"/>
    <property type="project" value="GO_Central"/>
</dbReference>
<dbReference type="GO" id="GO:0036150">
    <property type="term" value="P:phosphatidylserine acyl-chain remodeling"/>
    <property type="evidence" value="ECO:0000314"/>
    <property type="project" value="UniProtKB"/>
</dbReference>
<dbReference type="CDD" id="cd00125">
    <property type="entry name" value="PLA2c"/>
    <property type="match status" value="1"/>
</dbReference>
<dbReference type="FunFam" id="1.20.90.10:FF:000001">
    <property type="entry name" value="Basic phospholipase A2 homolog"/>
    <property type="match status" value="1"/>
</dbReference>
<dbReference type="Gene3D" id="1.20.90.10">
    <property type="entry name" value="Phospholipase A2 domain"/>
    <property type="match status" value="1"/>
</dbReference>
<dbReference type="InterPro" id="IPR001211">
    <property type="entry name" value="PLipase_A2"/>
</dbReference>
<dbReference type="InterPro" id="IPR016090">
    <property type="entry name" value="PLipase_A2_dom"/>
</dbReference>
<dbReference type="InterPro" id="IPR036444">
    <property type="entry name" value="PLipase_A2_dom_sf"/>
</dbReference>
<dbReference type="InterPro" id="IPR033113">
    <property type="entry name" value="PLipase_A2_His_AS"/>
</dbReference>
<dbReference type="PANTHER" id="PTHR11716:SF8">
    <property type="entry name" value="GROUP IIF SECRETORY PHOSPHOLIPASE A2"/>
    <property type="match status" value="1"/>
</dbReference>
<dbReference type="PANTHER" id="PTHR11716">
    <property type="entry name" value="PHOSPHOLIPASE A2 FAMILY MEMBER"/>
    <property type="match status" value="1"/>
</dbReference>
<dbReference type="Pfam" id="PF00068">
    <property type="entry name" value="Phospholip_A2_1"/>
    <property type="match status" value="1"/>
</dbReference>
<dbReference type="PRINTS" id="PR00389">
    <property type="entry name" value="PHPHLIPASEA2"/>
</dbReference>
<dbReference type="SMART" id="SM00085">
    <property type="entry name" value="PA2c"/>
    <property type="match status" value="1"/>
</dbReference>
<dbReference type="SUPFAM" id="SSF48619">
    <property type="entry name" value="Phospholipase A2, PLA2"/>
    <property type="match status" value="1"/>
</dbReference>
<dbReference type="PROSITE" id="PS00118">
    <property type="entry name" value="PA2_HIS"/>
    <property type="match status" value="1"/>
</dbReference>
<protein>
    <recommendedName>
        <fullName evidence="7">Group IIF secretory phospholipase A2</fullName>
        <shortName>GIIF sPLA2</shortName>
        <shortName>sPLA2-IIF</shortName>
        <ecNumber evidence="5">3.1.1.4</ecNumber>
    </recommendedName>
    <alternativeName>
        <fullName>Phosphatidylcholine 2-acylhydrolase 2F</fullName>
    </alternativeName>
</protein>
<organism>
    <name type="scientific">Homo sapiens</name>
    <name type="common">Human</name>
    <dbReference type="NCBI Taxonomy" id="9606"/>
    <lineage>
        <taxon>Eukaryota</taxon>
        <taxon>Metazoa</taxon>
        <taxon>Chordata</taxon>
        <taxon>Craniata</taxon>
        <taxon>Vertebrata</taxon>
        <taxon>Euteleostomi</taxon>
        <taxon>Mammalia</taxon>
        <taxon>Eutheria</taxon>
        <taxon>Euarchontoglires</taxon>
        <taxon>Primates</taxon>
        <taxon>Haplorrhini</taxon>
        <taxon>Catarrhini</taxon>
        <taxon>Hominidae</taxon>
        <taxon>Homo</taxon>
    </lineage>
</organism>
<comment type="function">
    <text evidence="2 5">Secretory calcium-dependent phospholipase A2 that primarily targets extracellular phospholipids. Hydrolyzes the ester bond of the fatty acyl group attached at the sn-2 position of phospholipids (phospholipase A2 activity), the catalytic efficiency decreasing in the following order: phosphatidylglycerols &gt; phosphatidylethanolamines &gt; phosphatidylcholines &gt; phosphatidylserines (PubMed:11112443). May play a role in lipid mediator production in inflammatory conditions, by providing arachidonic acid to downstream cyclooxygenases and lipoxygenases (By similarity).</text>
</comment>
<comment type="catalytic activity">
    <reaction evidence="4 5">
        <text>a 1,2-diacyl-sn-glycero-3-phosphocholine + H2O = a 1-acyl-sn-glycero-3-phosphocholine + a fatty acid + H(+)</text>
        <dbReference type="Rhea" id="RHEA:15801"/>
        <dbReference type="ChEBI" id="CHEBI:15377"/>
        <dbReference type="ChEBI" id="CHEBI:15378"/>
        <dbReference type="ChEBI" id="CHEBI:28868"/>
        <dbReference type="ChEBI" id="CHEBI:57643"/>
        <dbReference type="ChEBI" id="CHEBI:58168"/>
        <dbReference type="EC" id="3.1.1.4"/>
    </reaction>
    <physiologicalReaction direction="left-to-right" evidence="9">
        <dbReference type="Rhea" id="RHEA:15802"/>
    </physiologicalReaction>
</comment>
<comment type="catalytic activity">
    <reaction evidence="5">
        <text>1-hexadecanoyl-2-(9Z-octadecenoyl)-sn-glycero-3-phospho-(1'-sn-glycerol) + H2O = 1-hexadecanoyl-sn-glycero-3-phospho-(1'-sn-glycerol) + (9Z)-octadecenoate + H(+)</text>
        <dbReference type="Rhea" id="RHEA:40919"/>
        <dbReference type="ChEBI" id="CHEBI:15377"/>
        <dbReference type="ChEBI" id="CHEBI:15378"/>
        <dbReference type="ChEBI" id="CHEBI:30823"/>
        <dbReference type="ChEBI" id="CHEBI:72841"/>
        <dbReference type="ChEBI" id="CHEBI:75158"/>
    </reaction>
    <physiologicalReaction direction="left-to-right" evidence="9">
        <dbReference type="Rhea" id="RHEA:40920"/>
    </physiologicalReaction>
</comment>
<comment type="catalytic activity">
    <reaction evidence="2">
        <text>1-hexadecanoyl-2-(9Z,12Z-octadecadienoyl)-sn-glycero-3-phosphoethanolamine + H2O = 1-hexadecanoyl-sn-glycero-3-phosphoethanolamine + (9Z,12Z)-octadecadienoate + H(+)</text>
        <dbReference type="Rhea" id="RHEA:40815"/>
        <dbReference type="ChEBI" id="CHEBI:15377"/>
        <dbReference type="ChEBI" id="CHEBI:15378"/>
        <dbReference type="ChEBI" id="CHEBI:30245"/>
        <dbReference type="ChEBI" id="CHEBI:73004"/>
        <dbReference type="ChEBI" id="CHEBI:73008"/>
    </reaction>
    <physiologicalReaction direction="left-to-right" evidence="2">
        <dbReference type="Rhea" id="RHEA:40816"/>
    </physiologicalReaction>
</comment>
<comment type="catalytic activity">
    <reaction evidence="2">
        <text>1-hexadecanoyl-2-(5Z,8Z,11Z,14Z-eicosatetraenoyl)-sn-glycero-3-phosphoethanolamine + H2O = 1-hexadecanoyl-sn-glycero-3-phosphoethanolamine + (5Z,8Z,11Z,14Z)-eicosatetraenoate + H(+)</text>
        <dbReference type="Rhea" id="RHEA:40431"/>
        <dbReference type="ChEBI" id="CHEBI:15377"/>
        <dbReference type="ChEBI" id="CHEBI:15378"/>
        <dbReference type="ChEBI" id="CHEBI:32395"/>
        <dbReference type="ChEBI" id="CHEBI:73004"/>
        <dbReference type="ChEBI" id="CHEBI:73009"/>
    </reaction>
    <physiologicalReaction direction="left-to-right" evidence="2">
        <dbReference type="Rhea" id="RHEA:40432"/>
    </physiologicalReaction>
</comment>
<comment type="catalytic activity">
    <reaction evidence="5">
        <text>1-hexadecanoyl-2-(9Z-octadecenoyl)-sn-glycero-3-phosphocholine + H2O = 1-hexadecanoyl-sn-glycero-3-phosphocholine + (9Z)-octadecenoate + H(+)</text>
        <dbReference type="Rhea" id="RHEA:38779"/>
        <dbReference type="ChEBI" id="CHEBI:15377"/>
        <dbReference type="ChEBI" id="CHEBI:15378"/>
        <dbReference type="ChEBI" id="CHEBI:30823"/>
        <dbReference type="ChEBI" id="CHEBI:72998"/>
        <dbReference type="ChEBI" id="CHEBI:73001"/>
    </reaction>
    <physiologicalReaction direction="left-to-right" evidence="9">
        <dbReference type="Rhea" id="RHEA:38780"/>
    </physiologicalReaction>
</comment>
<comment type="catalytic activity">
    <reaction evidence="5">
        <text>1-hexadecanoyl-2-(9Z-octadecenoyl)-sn-glycero-3-phospho-L-serine + H2O = 1-hexadecanoyl-sn-glycero-3-phospho-L-serine + (9Z)-octadecenoate + H(+)</text>
        <dbReference type="Rhea" id="RHEA:41752"/>
        <dbReference type="ChEBI" id="CHEBI:15377"/>
        <dbReference type="ChEBI" id="CHEBI:15378"/>
        <dbReference type="ChEBI" id="CHEBI:30823"/>
        <dbReference type="ChEBI" id="CHEBI:75020"/>
        <dbReference type="ChEBI" id="CHEBI:75029"/>
    </reaction>
    <physiologicalReaction direction="left-to-right" evidence="9">
        <dbReference type="Rhea" id="RHEA:41753"/>
    </physiologicalReaction>
</comment>
<comment type="cofactor">
    <cofactor evidence="5">
        <name>Ca(2+)</name>
        <dbReference type="ChEBI" id="CHEBI:29108"/>
    </cofactor>
    <text evidence="5">Binds 1 Ca(2+) ion per subunit.</text>
</comment>
<comment type="biophysicochemical properties">
    <phDependence>
        <text evidence="5">Optimum pH is 7-8.</text>
    </phDependence>
</comment>
<comment type="interaction">
    <interactant intactId="EBI-12826629">
        <id>Q9BZM2-2</id>
    </interactant>
    <interactant intactId="EBI-12135485">
        <id>P41271-2</id>
        <label>NBL1</label>
    </interactant>
    <organismsDiffer>false</organismsDiffer>
    <experiments>3</experiments>
</comment>
<comment type="interaction">
    <interactant intactId="EBI-12826629">
        <id>Q9BZM2-2</id>
    </interactant>
    <interactant intactId="EBI-10191303">
        <id>O95231</id>
        <label>VENTX</label>
    </interactant>
    <organismsDiffer>false</organismsDiffer>
    <experiments>3</experiments>
</comment>
<comment type="subcellular location">
    <molecule>Isoform 1</molecule>
    <subcellularLocation>
        <location evidence="2">Secreted</location>
    </subcellularLocation>
    <subcellularLocation>
        <location>Cell membrane</location>
        <topology evidence="2">Peripheral membrane protein</topology>
    </subcellularLocation>
</comment>
<comment type="alternative products">
    <event type="alternative splicing"/>
    <isoform>
        <id>Q9BZM2-1</id>
        <name>1</name>
        <sequence type="displayed"/>
    </isoform>
    <isoform>
        <id>Q9BZM2-2</id>
        <name>2</name>
        <sequence type="described" ref="VSP_037524"/>
    </isoform>
</comment>
<comment type="tissue specificity">
    <text evidence="5 6">Expressed at high levels in placenta, testis, thymus and at lower levels in heart, kidney, liver and prostate (PubMed:11112443). Highly expressed in rheumatoid arthritic tissues, including synovial lining cells in the intima, capillary endothelial cells and plasma cells (PubMed:11877435).</text>
</comment>
<comment type="miscellaneous">
    <molecule>Isoform 2</molecule>
    <text evidence="8">No signal peptide could be predicted in this isoform, challenging its subcellular location within the secretory pathway and hence the formation of disulfide bonds, which are required for its activity.</text>
</comment>
<comment type="similarity">
    <text evidence="8">Belongs to the phospholipase A2 family.</text>
</comment>
<evidence type="ECO:0000250" key="1"/>
<evidence type="ECO:0000250" key="2">
    <source>
        <dbReference type="UniProtKB" id="Q9QZT4"/>
    </source>
</evidence>
<evidence type="ECO:0000255" key="3"/>
<evidence type="ECO:0000255" key="4">
    <source>
        <dbReference type="PROSITE-ProRule" id="PRU10035"/>
    </source>
</evidence>
<evidence type="ECO:0000269" key="5">
    <source>
    </source>
</evidence>
<evidence type="ECO:0000269" key="6">
    <source>
    </source>
</evidence>
<evidence type="ECO:0000303" key="7">
    <source>
    </source>
</evidence>
<evidence type="ECO:0000305" key="8"/>
<evidence type="ECO:0000305" key="9">
    <source>
    </source>
</evidence>
<proteinExistence type="evidence at protein level"/>
<reference key="1">
    <citation type="journal article" date="2000" name="Biochem. Biophys. Res. Commun.">
        <title>Cloning and recombinant expression of human group IIF-secreted phospholipase A(2).</title>
        <authorList>
            <person name="Valentin E."/>
            <person name="Singer A.G."/>
            <person name="Ghomashchi F."/>
            <person name="Lazdunski M."/>
            <person name="Gelb M.H."/>
            <person name="Lambeau G."/>
        </authorList>
    </citation>
    <scope>NUCLEOTIDE SEQUENCE [MRNA] (ISOFORM 1)</scope>
    <scope>FUNCTION</scope>
    <scope>CATALYTIC ACTIVITY</scope>
    <scope>COFACTOR</scope>
    <scope>BIOPHYSICOCHEMICAL PROPERTIES</scope>
    <scope>TISSUE SPECIFICITY</scope>
    <source>
        <tissue>Fetal lung</tissue>
        <tissue>Heart</tissue>
        <tissue>Spleen</tissue>
    </source>
</reference>
<reference key="2">
    <citation type="journal article" date="2004" name="Nat. Genet.">
        <title>Complete sequencing and characterization of 21,243 full-length human cDNAs.</title>
        <authorList>
            <person name="Ota T."/>
            <person name="Suzuki Y."/>
            <person name="Nishikawa T."/>
            <person name="Otsuki T."/>
            <person name="Sugiyama T."/>
            <person name="Irie R."/>
            <person name="Wakamatsu A."/>
            <person name="Hayashi K."/>
            <person name="Sato H."/>
            <person name="Nagai K."/>
            <person name="Kimura K."/>
            <person name="Makita H."/>
            <person name="Sekine M."/>
            <person name="Obayashi M."/>
            <person name="Nishi T."/>
            <person name="Shibahara T."/>
            <person name="Tanaka T."/>
            <person name="Ishii S."/>
            <person name="Yamamoto J."/>
            <person name="Saito K."/>
            <person name="Kawai Y."/>
            <person name="Isono Y."/>
            <person name="Nakamura Y."/>
            <person name="Nagahari K."/>
            <person name="Murakami K."/>
            <person name="Yasuda T."/>
            <person name="Iwayanagi T."/>
            <person name="Wagatsuma M."/>
            <person name="Shiratori A."/>
            <person name="Sudo H."/>
            <person name="Hosoiri T."/>
            <person name="Kaku Y."/>
            <person name="Kodaira H."/>
            <person name="Kondo H."/>
            <person name="Sugawara M."/>
            <person name="Takahashi M."/>
            <person name="Kanda K."/>
            <person name="Yokoi T."/>
            <person name="Furuya T."/>
            <person name="Kikkawa E."/>
            <person name="Omura Y."/>
            <person name="Abe K."/>
            <person name="Kamihara K."/>
            <person name="Katsuta N."/>
            <person name="Sato K."/>
            <person name="Tanikawa M."/>
            <person name="Yamazaki M."/>
            <person name="Ninomiya K."/>
            <person name="Ishibashi T."/>
            <person name="Yamashita H."/>
            <person name="Murakawa K."/>
            <person name="Fujimori K."/>
            <person name="Tanai H."/>
            <person name="Kimata M."/>
            <person name="Watanabe M."/>
            <person name="Hiraoka S."/>
            <person name="Chiba Y."/>
            <person name="Ishida S."/>
            <person name="Ono Y."/>
            <person name="Takiguchi S."/>
            <person name="Watanabe S."/>
            <person name="Yosida M."/>
            <person name="Hotuta T."/>
            <person name="Kusano J."/>
            <person name="Kanehori K."/>
            <person name="Takahashi-Fujii A."/>
            <person name="Hara H."/>
            <person name="Tanase T.-O."/>
            <person name="Nomura Y."/>
            <person name="Togiya S."/>
            <person name="Komai F."/>
            <person name="Hara R."/>
            <person name="Takeuchi K."/>
            <person name="Arita M."/>
            <person name="Imose N."/>
            <person name="Musashino K."/>
            <person name="Yuuki H."/>
            <person name="Oshima A."/>
            <person name="Sasaki N."/>
            <person name="Aotsuka S."/>
            <person name="Yoshikawa Y."/>
            <person name="Matsunawa H."/>
            <person name="Ichihara T."/>
            <person name="Shiohata N."/>
            <person name="Sano S."/>
            <person name="Moriya S."/>
            <person name="Momiyama H."/>
            <person name="Satoh N."/>
            <person name="Takami S."/>
            <person name="Terashima Y."/>
            <person name="Suzuki O."/>
            <person name="Nakagawa S."/>
            <person name="Senoh A."/>
            <person name="Mizoguchi H."/>
            <person name="Goto Y."/>
            <person name="Shimizu F."/>
            <person name="Wakebe H."/>
            <person name="Hishigaki H."/>
            <person name="Watanabe T."/>
            <person name="Sugiyama A."/>
            <person name="Takemoto M."/>
            <person name="Kawakami B."/>
            <person name="Yamazaki M."/>
            <person name="Watanabe K."/>
            <person name="Kumagai A."/>
            <person name="Itakura S."/>
            <person name="Fukuzumi Y."/>
            <person name="Fujimori Y."/>
            <person name="Komiyama M."/>
            <person name="Tashiro H."/>
            <person name="Tanigami A."/>
            <person name="Fujiwara T."/>
            <person name="Ono T."/>
            <person name="Yamada K."/>
            <person name="Fujii Y."/>
            <person name="Ozaki K."/>
            <person name="Hirao M."/>
            <person name="Ohmori Y."/>
            <person name="Kawabata A."/>
            <person name="Hikiji T."/>
            <person name="Kobatake N."/>
            <person name="Inagaki H."/>
            <person name="Ikema Y."/>
            <person name="Okamoto S."/>
            <person name="Okitani R."/>
            <person name="Kawakami T."/>
            <person name="Noguchi S."/>
            <person name="Itoh T."/>
            <person name="Shigeta K."/>
            <person name="Senba T."/>
            <person name="Matsumura K."/>
            <person name="Nakajima Y."/>
            <person name="Mizuno T."/>
            <person name="Morinaga M."/>
            <person name="Sasaki M."/>
            <person name="Togashi T."/>
            <person name="Oyama M."/>
            <person name="Hata H."/>
            <person name="Watanabe M."/>
            <person name="Komatsu T."/>
            <person name="Mizushima-Sugano J."/>
            <person name="Satoh T."/>
            <person name="Shirai Y."/>
            <person name="Takahashi Y."/>
            <person name="Nakagawa K."/>
            <person name="Okumura K."/>
            <person name="Nagase T."/>
            <person name="Nomura N."/>
            <person name="Kikuchi H."/>
            <person name="Masuho Y."/>
            <person name="Yamashita R."/>
            <person name="Nakai K."/>
            <person name="Yada T."/>
            <person name="Nakamura Y."/>
            <person name="Ohara O."/>
            <person name="Isogai T."/>
            <person name="Sugano S."/>
        </authorList>
    </citation>
    <scope>NUCLEOTIDE SEQUENCE [LARGE SCALE MRNA] (ISOFORM 1)</scope>
    <source>
        <tissue>Thymus</tissue>
    </source>
</reference>
<reference key="3">
    <citation type="journal article" date="2006" name="Nature">
        <title>The DNA sequence and biological annotation of human chromosome 1.</title>
        <authorList>
            <person name="Gregory S.G."/>
            <person name="Barlow K.F."/>
            <person name="McLay K.E."/>
            <person name="Kaul R."/>
            <person name="Swarbreck D."/>
            <person name="Dunham A."/>
            <person name="Scott C.E."/>
            <person name="Howe K.L."/>
            <person name="Woodfine K."/>
            <person name="Spencer C.C.A."/>
            <person name="Jones M.C."/>
            <person name="Gillson C."/>
            <person name="Searle S."/>
            <person name="Zhou Y."/>
            <person name="Kokocinski F."/>
            <person name="McDonald L."/>
            <person name="Evans R."/>
            <person name="Phillips K."/>
            <person name="Atkinson A."/>
            <person name="Cooper R."/>
            <person name="Jones C."/>
            <person name="Hall R.E."/>
            <person name="Andrews T.D."/>
            <person name="Lloyd C."/>
            <person name="Ainscough R."/>
            <person name="Almeida J.P."/>
            <person name="Ambrose K.D."/>
            <person name="Anderson F."/>
            <person name="Andrew R.W."/>
            <person name="Ashwell R.I.S."/>
            <person name="Aubin K."/>
            <person name="Babbage A.K."/>
            <person name="Bagguley C.L."/>
            <person name="Bailey J."/>
            <person name="Beasley H."/>
            <person name="Bethel G."/>
            <person name="Bird C.P."/>
            <person name="Bray-Allen S."/>
            <person name="Brown J.Y."/>
            <person name="Brown A.J."/>
            <person name="Buckley D."/>
            <person name="Burton J."/>
            <person name="Bye J."/>
            <person name="Carder C."/>
            <person name="Chapman J.C."/>
            <person name="Clark S.Y."/>
            <person name="Clarke G."/>
            <person name="Clee C."/>
            <person name="Cobley V."/>
            <person name="Collier R.E."/>
            <person name="Corby N."/>
            <person name="Coville G.J."/>
            <person name="Davies J."/>
            <person name="Deadman R."/>
            <person name="Dunn M."/>
            <person name="Earthrowl M."/>
            <person name="Ellington A.G."/>
            <person name="Errington H."/>
            <person name="Frankish A."/>
            <person name="Frankland J."/>
            <person name="French L."/>
            <person name="Garner P."/>
            <person name="Garnett J."/>
            <person name="Gay L."/>
            <person name="Ghori M.R.J."/>
            <person name="Gibson R."/>
            <person name="Gilby L.M."/>
            <person name="Gillett W."/>
            <person name="Glithero R.J."/>
            <person name="Grafham D.V."/>
            <person name="Griffiths C."/>
            <person name="Griffiths-Jones S."/>
            <person name="Grocock R."/>
            <person name="Hammond S."/>
            <person name="Harrison E.S.I."/>
            <person name="Hart E."/>
            <person name="Haugen E."/>
            <person name="Heath P.D."/>
            <person name="Holmes S."/>
            <person name="Holt K."/>
            <person name="Howden P.J."/>
            <person name="Hunt A.R."/>
            <person name="Hunt S.E."/>
            <person name="Hunter G."/>
            <person name="Isherwood J."/>
            <person name="James R."/>
            <person name="Johnson C."/>
            <person name="Johnson D."/>
            <person name="Joy A."/>
            <person name="Kay M."/>
            <person name="Kershaw J.K."/>
            <person name="Kibukawa M."/>
            <person name="Kimberley A.M."/>
            <person name="King A."/>
            <person name="Knights A.J."/>
            <person name="Lad H."/>
            <person name="Laird G."/>
            <person name="Lawlor S."/>
            <person name="Leongamornlert D.A."/>
            <person name="Lloyd D.M."/>
            <person name="Loveland J."/>
            <person name="Lovell J."/>
            <person name="Lush M.J."/>
            <person name="Lyne R."/>
            <person name="Martin S."/>
            <person name="Mashreghi-Mohammadi M."/>
            <person name="Matthews L."/>
            <person name="Matthews N.S.W."/>
            <person name="McLaren S."/>
            <person name="Milne S."/>
            <person name="Mistry S."/>
            <person name="Moore M.J.F."/>
            <person name="Nickerson T."/>
            <person name="O'Dell C.N."/>
            <person name="Oliver K."/>
            <person name="Palmeiri A."/>
            <person name="Palmer S.A."/>
            <person name="Parker A."/>
            <person name="Patel D."/>
            <person name="Pearce A.V."/>
            <person name="Peck A.I."/>
            <person name="Pelan S."/>
            <person name="Phelps K."/>
            <person name="Phillimore B.J."/>
            <person name="Plumb R."/>
            <person name="Rajan J."/>
            <person name="Raymond C."/>
            <person name="Rouse G."/>
            <person name="Saenphimmachak C."/>
            <person name="Sehra H.K."/>
            <person name="Sheridan E."/>
            <person name="Shownkeen R."/>
            <person name="Sims S."/>
            <person name="Skuce C.D."/>
            <person name="Smith M."/>
            <person name="Steward C."/>
            <person name="Subramanian S."/>
            <person name="Sycamore N."/>
            <person name="Tracey A."/>
            <person name="Tromans A."/>
            <person name="Van Helmond Z."/>
            <person name="Wall M."/>
            <person name="Wallis J.M."/>
            <person name="White S."/>
            <person name="Whitehead S.L."/>
            <person name="Wilkinson J.E."/>
            <person name="Willey D.L."/>
            <person name="Williams H."/>
            <person name="Wilming L."/>
            <person name="Wray P.W."/>
            <person name="Wu Z."/>
            <person name="Coulson A."/>
            <person name="Vaudin M."/>
            <person name="Sulston J.E."/>
            <person name="Durbin R.M."/>
            <person name="Hubbard T."/>
            <person name="Wooster R."/>
            <person name="Dunham I."/>
            <person name="Carter N.P."/>
            <person name="McVean G."/>
            <person name="Ross M.T."/>
            <person name="Harrow J."/>
            <person name="Olson M.V."/>
            <person name="Beck S."/>
            <person name="Rogers J."/>
            <person name="Bentley D.R."/>
        </authorList>
    </citation>
    <scope>NUCLEOTIDE SEQUENCE [LARGE SCALE GENOMIC DNA]</scope>
</reference>
<reference key="4">
    <citation type="journal article" date="2002" name="J. Biol. Chem.">
        <title>Cellular arachidonate-releasing function and inflammation-associated expression of group IIF secretory phospholipase A2.</title>
        <authorList>
            <person name="Murakami M."/>
            <person name="Yoshihara K."/>
            <person name="Shimbara S."/>
            <person name="Lambeau G."/>
            <person name="Gelb M.H."/>
            <person name="Singer A.G."/>
            <person name="Sawada M."/>
            <person name="Inagaki N."/>
            <person name="Nagai H."/>
            <person name="Ishihara M."/>
            <person name="Ishikawa Y."/>
            <person name="Ishii T."/>
            <person name="Kudo I."/>
        </authorList>
    </citation>
    <scope>TISSUE SPECIFICITY</scope>
</reference>
<keyword id="KW-0025">Alternative splicing</keyword>
<keyword id="KW-0106">Calcium</keyword>
<keyword id="KW-1003">Cell membrane</keyword>
<keyword id="KW-1015">Disulfide bond</keyword>
<keyword id="KW-0325">Glycoprotein</keyword>
<keyword id="KW-0378">Hydrolase</keyword>
<keyword id="KW-0391">Immunity</keyword>
<keyword id="KW-0399">Innate immunity</keyword>
<keyword id="KW-0442">Lipid degradation</keyword>
<keyword id="KW-0443">Lipid metabolism</keyword>
<keyword id="KW-0472">Membrane</keyword>
<keyword id="KW-0479">Metal-binding</keyword>
<keyword id="KW-1185">Reference proteome</keyword>
<keyword id="KW-0964">Secreted</keyword>
<keyword id="KW-0732">Signal</keyword>
<gene>
    <name type="primary">PLA2G2F</name>
</gene>
<name>PA2GF_HUMAN</name>
<feature type="signal peptide" evidence="3">
    <location>
        <begin position="1"/>
        <end position="20"/>
    </location>
</feature>
<feature type="chain" id="PRO_0000022759" description="Group IIF secretory phospholipase A2">
    <location>
        <begin position="21"/>
        <end position="168"/>
    </location>
</feature>
<feature type="region of interest" description="Required for localization on the plasma membrane" evidence="2">
    <location>
        <begin position="139"/>
        <end position="168"/>
    </location>
</feature>
<feature type="active site" evidence="4">
    <location>
        <position position="67"/>
    </location>
</feature>
<feature type="active site" evidence="4">
    <location>
        <position position="114"/>
    </location>
</feature>
<feature type="binding site" evidence="1">
    <location>
        <position position="47"/>
    </location>
    <ligand>
        <name>Ca(2+)</name>
        <dbReference type="ChEBI" id="CHEBI:29108"/>
    </ligand>
</feature>
<feature type="binding site" evidence="1">
    <location>
        <position position="49"/>
    </location>
    <ligand>
        <name>Ca(2+)</name>
        <dbReference type="ChEBI" id="CHEBI:29108"/>
    </ligand>
</feature>
<feature type="binding site" evidence="1">
    <location>
        <position position="51"/>
    </location>
    <ligand>
        <name>Ca(2+)</name>
        <dbReference type="ChEBI" id="CHEBI:29108"/>
    </ligand>
</feature>
<feature type="binding site" evidence="1">
    <location>
        <position position="68"/>
    </location>
    <ligand>
        <name>Ca(2+)</name>
        <dbReference type="ChEBI" id="CHEBI:29108"/>
    </ligand>
</feature>
<feature type="glycosylation site" description="N-linked (GlcNAc...) asparagine" evidence="3">
    <location>
        <position position="92"/>
    </location>
</feature>
<feature type="glycosylation site" description="N-linked (GlcNAc...) asparagine" evidence="3">
    <location>
        <position position="102"/>
    </location>
</feature>
<feature type="glycosylation site" description="N-linked (GlcNAc...) asparagine" evidence="3">
    <location>
        <position position="123"/>
    </location>
</feature>
<feature type="glycosylation site" description="N-linked (GlcNAc...) asparagine" evidence="3">
    <location>
        <position position="144"/>
    </location>
</feature>
<feature type="disulfide bond" evidence="1">
    <location>
        <begin position="46"/>
        <end position="138"/>
    </location>
</feature>
<feature type="disulfide bond" evidence="1">
    <location>
        <begin position="48"/>
        <end position="64"/>
    </location>
</feature>
<feature type="disulfide bond" evidence="1">
    <location>
        <begin position="63"/>
        <end position="120"/>
    </location>
</feature>
<feature type="disulfide bond" evidence="1">
    <location>
        <begin position="69"/>
        <end position="145"/>
    </location>
</feature>
<feature type="disulfide bond" evidence="1">
    <location>
        <begin position="70"/>
        <end position="113"/>
    </location>
</feature>
<feature type="disulfide bond" evidence="1">
    <location>
        <begin position="79"/>
        <end position="106"/>
    </location>
</feature>
<feature type="disulfide bond" evidence="1">
    <location>
        <begin position="98"/>
        <end position="111"/>
    </location>
</feature>
<feature type="splice variant" id="VSP_037524" description="In isoform 2." evidence="8">
    <original>M</original>
    <variation>MADGAKANPKGFKKKVLDRCFSGWRGPRFGASCPSRTSRSSLGM</variation>
    <location>
        <position position="1"/>
    </location>
</feature>
<feature type="sequence conflict" description="In Ref. 2; BAC04210." evidence="8" ref="2">
    <original>E</original>
    <variation>G</variation>
    <location>
        <position position="149"/>
    </location>
</feature>
<accession>Q9BZM2</accession>
<accession>Q5R385</accession>
<accession>Q8N217</accession>
<accession>Q9H506</accession>